<accession>P0AG43</accession>
<accession>P08391</accession>
<accession>P75621</accession>
<evidence type="ECO:0000250" key="1">
    <source>
        <dbReference type="UniProtKB" id="Q59263"/>
    </source>
</evidence>
<evidence type="ECO:0000305" key="2"/>
<feature type="chain" id="PRO_0000194143" description="Bifunctional riboflavin kinase/FMN adenylyltransferase">
    <location>
        <begin position="1"/>
        <end position="313"/>
    </location>
</feature>
<proteinExistence type="inferred from homology"/>
<gene>
    <name type="primary">ribF</name>
    <name type="ordered locus">SF0021</name>
    <name type="ordered locus">S0024</name>
</gene>
<reference key="1">
    <citation type="journal article" date="2002" name="Nucleic Acids Res.">
        <title>Genome sequence of Shigella flexneri 2a: insights into pathogenicity through comparison with genomes of Escherichia coli K12 and O157.</title>
        <authorList>
            <person name="Jin Q."/>
            <person name="Yuan Z."/>
            <person name="Xu J."/>
            <person name="Wang Y."/>
            <person name="Shen Y."/>
            <person name="Lu W."/>
            <person name="Wang J."/>
            <person name="Liu H."/>
            <person name="Yang J."/>
            <person name="Yang F."/>
            <person name="Zhang X."/>
            <person name="Zhang J."/>
            <person name="Yang G."/>
            <person name="Wu H."/>
            <person name="Qu D."/>
            <person name="Dong J."/>
            <person name="Sun L."/>
            <person name="Xue Y."/>
            <person name="Zhao A."/>
            <person name="Gao Y."/>
            <person name="Zhu J."/>
            <person name="Kan B."/>
            <person name="Ding K."/>
            <person name="Chen S."/>
            <person name="Cheng H."/>
            <person name="Yao Z."/>
            <person name="He B."/>
            <person name="Chen R."/>
            <person name="Ma D."/>
            <person name="Qiang B."/>
            <person name="Wen Y."/>
            <person name="Hou Y."/>
            <person name="Yu J."/>
        </authorList>
    </citation>
    <scope>NUCLEOTIDE SEQUENCE [LARGE SCALE GENOMIC DNA]</scope>
    <source>
        <strain>301 / Serotype 2a</strain>
    </source>
</reference>
<reference key="2">
    <citation type="journal article" date="2003" name="Infect. Immun.">
        <title>Complete genome sequence and comparative genomics of Shigella flexneri serotype 2a strain 2457T.</title>
        <authorList>
            <person name="Wei J."/>
            <person name="Goldberg M.B."/>
            <person name="Burland V."/>
            <person name="Venkatesan M.M."/>
            <person name="Deng W."/>
            <person name="Fournier G."/>
            <person name="Mayhew G.F."/>
            <person name="Plunkett G. III"/>
            <person name="Rose D.J."/>
            <person name="Darling A."/>
            <person name="Mau B."/>
            <person name="Perna N.T."/>
            <person name="Payne S.M."/>
            <person name="Runyen-Janecky L.J."/>
            <person name="Zhou S."/>
            <person name="Schwartz D.C."/>
            <person name="Blattner F.R."/>
        </authorList>
    </citation>
    <scope>NUCLEOTIDE SEQUENCE [LARGE SCALE GENOMIC DNA]</scope>
    <source>
        <strain>ATCC 700930 / 2457T / Serotype 2a</strain>
    </source>
</reference>
<protein>
    <recommendedName>
        <fullName evidence="1">Bifunctional riboflavin kinase/FMN adenylyltransferase</fullName>
    </recommendedName>
    <alternativeName>
        <fullName evidence="1">Riboflavin biosynthesis protein RibF</fullName>
    </alternativeName>
    <domain>
        <recommendedName>
            <fullName evidence="1">Riboflavin kinase</fullName>
            <ecNumber evidence="1">2.7.1.26</ecNumber>
        </recommendedName>
        <alternativeName>
            <fullName evidence="1">Flavokinase</fullName>
        </alternativeName>
    </domain>
    <domain>
        <recommendedName>
            <fullName evidence="1">FMN adenylyltransferase</fullName>
            <ecNumber evidence="1">2.7.7.2</ecNumber>
        </recommendedName>
        <alternativeName>
            <fullName evidence="1">FAD pyrophosphorylase</fullName>
        </alternativeName>
        <alternativeName>
            <fullName evidence="1">FAD synthase</fullName>
        </alternativeName>
    </domain>
</protein>
<keyword id="KW-0067">ATP-binding</keyword>
<keyword id="KW-0274">FAD</keyword>
<keyword id="KW-0285">Flavoprotein</keyword>
<keyword id="KW-0288">FMN</keyword>
<keyword id="KW-0418">Kinase</keyword>
<keyword id="KW-0511">Multifunctional enzyme</keyword>
<keyword id="KW-0547">Nucleotide-binding</keyword>
<keyword id="KW-0548">Nucleotidyltransferase</keyword>
<keyword id="KW-1185">Reference proteome</keyword>
<keyword id="KW-0808">Transferase</keyword>
<organism>
    <name type="scientific">Shigella flexneri</name>
    <dbReference type="NCBI Taxonomy" id="623"/>
    <lineage>
        <taxon>Bacteria</taxon>
        <taxon>Pseudomonadati</taxon>
        <taxon>Pseudomonadota</taxon>
        <taxon>Gammaproteobacteria</taxon>
        <taxon>Enterobacterales</taxon>
        <taxon>Enterobacteriaceae</taxon>
        <taxon>Shigella</taxon>
    </lineage>
</organism>
<sequence>MKLIRGIHNLSQAPQEGCVLTIGNFDGVHRGHRALLQGLQEEGRKRNLPVMVMLFEPQPLELFATDKAPARLTRLREKLRYLAECGVDYVLCVRFDRRFAALTAQNFISDLLVKHLRVKFLAVGDDFRFGAGREGDFLLLQKAGMEYGFDITSTQTFCEGGVRISSTAVRQALADDNLALAESLLGHPFAISGRVVHGDELGRTIGFPTANVPLRRQVSPVKGVYAVEVLGLGEKPLPGVANIGTRPTVAGIRQQLEVHLLDVAMDLYGRHIQVVLRKKIRNEQRFASLDELKAQIARDELTAREFFGLTKPA</sequence>
<dbReference type="EC" id="2.7.1.26" evidence="1"/>
<dbReference type="EC" id="2.7.7.2" evidence="1"/>
<dbReference type="EMBL" id="AE005674">
    <property type="protein sequence ID" value="AAN41687.1"/>
    <property type="molecule type" value="Genomic_DNA"/>
</dbReference>
<dbReference type="EMBL" id="AE014073">
    <property type="protein sequence ID" value="AAP15569.1"/>
    <property type="molecule type" value="Genomic_DNA"/>
</dbReference>
<dbReference type="RefSeq" id="NP_705980.1">
    <property type="nucleotide sequence ID" value="NC_004337.2"/>
</dbReference>
<dbReference type="RefSeq" id="WP_000767329.1">
    <property type="nucleotide sequence ID" value="NZ_WPGW01000005.1"/>
</dbReference>
<dbReference type="SMR" id="P0AG43"/>
<dbReference type="STRING" id="198214.SF0021"/>
<dbReference type="PaxDb" id="198214-SF0021"/>
<dbReference type="GeneID" id="1024592"/>
<dbReference type="GeneID" id="93777411"/>
<dbReference type="KEGG" id="sfl:SF0021"/>
<dbReference type="KEGG" id="sfx:S0024"/>
<dbReference type="PATRIC" id="fig|198214.7.peg.24"/>
<dbReference type="HOGENOM" id="CLU_048437_0_1_6"/>
<dbReference type="UniPathway" id="UPA00276">
    <property type="reaction ID" value="UER00406"/>
</dbReference>
<dbReference type="UniPathway" id="UPA00277">
    <property type="reaction ID" value="UER00407"/>
</dbReference>
<dbReference type="Proteomes" id="UP000001006">
    <property type="component" value="Chromosome"/>
</dbReference>
<dbReference type="Proteomes" id="UP000002673">
    <property type="component" value="Chromosome"/>
</dbReference>
<dbReference type="GO" id="GO:0005524">
    <property type="term" value="F:ATP binding"/>
    <property type="evidence" value="ECO:0007669"/>
    <property type="project" value="UniProtKB-KW"/>
</dbReference>
<dbReference type="GO" id="GO:0003919">
    <property type="term" value="F:FMN adenylyltransferase activity"/>
    <property type="evidence" value="ECO:0007669"/>
    <property type="project" value="UniProtKB-EC"/>
</dbReference>
<dbReference type="GO" id="GO:0008531">
    <property type="term" value="F:riboflavin kinase activity"/>
    <property type="evidence" value="ECO:0007669"/>
    <property type="project" value="UniProtKB-EC"/>
</dbReference>
<dbReference type="GO" id="GO:0006747">
    <property type="term" value="P:FAD biosynthetic process"/>
    <property type="evidence" value="ECO:0007669"/>
    <property type="project" value="UniProtKB-UniPathway"/>
</dbReference>
<dbReference type="GO" id="GO:0009398">
    <property type="term" value="P:FMN biosynthetic process"/>
    <property type="evidence" value="ECO:0007669"/>
    <property type="project" value="UniProtKB-UniPathway"/>
</dbReference>
<dbReference type="GO" id="GO:0009231">
    <property type="term" value="P:riboflavin biosynthetic process"/>
    <property type="evidence" value="ECO:0007669"/>
    <property type="project" value="InterPro"/>
</dbReference>
<dbReference type="CDD" id="cd02064">
    <property type="entry name" value="FAD_synthetase_N"/>
    <property type="match status" value="1"/>
</dbReference>
<dbReference type="FunFam" id="2.40.30.30:FF:000001">
    <property type="entry name" value="Riboflavin biosynthesis protein"/>
    <property type="match status" value="1"/>
</dbReference>
<dbReference type="FunFam" id="3.40.50.620:FF:000021">
    <property type="entry name" value="Riboflavin biosynthesis protein"/>
    <property type="match status" value="1"/>
</dbReference>
<dbReference type="Gene3D" id="3.40.50.620">
    <property type="entry name" value="HUPs"/>
    <property type="match status" value="1"/>
</dbReference>
<dbReference type="Gene3D" id="2.40.30.30">
    <property type="entry name" value="Riboflavin kinase-like"/>
    <property type="match status" value="1"/>
</dbReference>
<dbReference type="InterPro" id="IPR015864">
    <property type="entry name" value="FAD_synthase"/>
</dbReference>
<dbReference type="InterPro" id="IPR023468">
    <property type="entry name" value="Riboflavin_kinase"/>
</dbReference>
<dbReference type="InterPro" id="IPR002606">
    <property type="entry name" value="Riboflavin_kinase_bac"/>
</dbReference>
<dbReference type="InterPro" id="IPR015865">
    <property type="entry name" value="Riboflavin_kinase_bac/euk"/>
</dbReference>
<dbReference type="InterPro" id="IPR023465">
    <property type="entry name" value="Riboflavin_kinase_dom_sf"/>
</dbReference>
<dbReference type="InterPro" id="IPR014729">
    <property type="entry name" value="Rossmann-like_a/b/a_fold"/>
</dbReference>
<dbReference type="NCBIfam" id="NF004159">
    <property type="entry name" value="PRK05627.1-2"/>
    <property type="match status" value="1"/>
</dbReference>
<dbReference type="NCBIfam" id="NF004160">
    <property type="entry name" value="PRK05627.1-3"/>
    <property type="match status" value="1"/>
</dbReference>
<dbReference type="NCBIfam" id="NF004162">
    <property type="entry name" value="PRK05627.1-5"/>
    <property type="match status" value="1"/>
</dbReference>
<dbReference type="NCBIfam" id="NF004163">
    <property type="entry name" value="PRK05627.1-6"/>
    <property type="match status" value="1"/>
</dbReference>
<dbReference type="NCBIfam" id="TIGR00083">
    <property type="entry name" value="ribF"/>
    <property type="match status" value="1"/>
</dbReference>
<dbReference type="PANTHER" id="PTHR22749:SF6">
    <property type="entry name" value="RIBOFLAVIN KINASE"/>
    <property type="match status" value="1"/>
</dbReference>
<dbReference type="PANTHER" id="PTHR22749">
    <property type="entry name" value="RIBOFLAVIN KINASE/FMN ADENYLYLTRANSFERASE"/>
    <property type="match status" value="1"/>
</dbReference>
<dbReference type="Pfam" id="PF06574">
    <property type="entry name" value="FAD_syn"/>
    <property type="match status" value="1"/>
</dbReference>
<dbReference type="Pfam" id="PF01687">
    <property type="entry name" value="Flavokinase"/>
    <property type="match status" value="1"/>
</dbReference>
<dbReference type="PIRSF" id="PIRSF004491">
    <property type="entry name" value="FAD_Synth"/>
    <property type="match status" value="1"/>
</dbReference>
<dbReference type="SMART" id="SM00904">
    <property type="entry name" value="Flavokinase"/>
    <property type="match status" value="1"/>
</dbReference>
<dbReference type="SUPFAM" id="SSF52374">
    <property type="entry name" value="Nucleotidylyl transferase"/>
    <property type="match status" value="1"/>
</dbReference>
<dbReference type="SUPFAM" id="SSF82114">
    <property type="entry name" value="Riboflavin kinase-like"/>
    <property type="match status" value="1"/>
</dbReference>
<comment type="function">
    <text evidence="1">Catalyzes the phosphorylation of riboflavin to FMN followed by the adenylation of FMN to FAD.</text>
</comment>
<comment type="catalytic activity">
    <reaction evidence="1">
        <text>riboflavin + ATP = FMN + ADP + H(+)</text>
        <dbReference type="Rhea" id="RHEA:14357"/>
        <dbReference type="ChEBI" id="CHEBI:15378"/>
        <dbReference type="ChEBI" id="CHEBI:30616"/>
        <dbReference type="ChEBI" id="CHEBI:57986"/>
        <dbReference type="ChEBI" id="CHEBI:58210"/>
        <dbReference type="ChEBI" id="CHEBI:456216"/>
        <dbReference type="EC" id="2.7.1.26"/>
    </reaction>
</comment>
<comment type="catalytic activity">
    <reaction evidence="1">
        <text>FMN + ATP + H(+) = FAD + diphosphate</text>
        <dbReference type="Rhea" id="RHEA:17237"/>
        <dbReference type="ChEBI" id="CHEBI:15378"/>
        <dbReference type="ChEBI" id="CHEBI:30616"/>
        <dbReference type="ChEBI" id="CHEBI:33019"/>
        <dbReference type="ChEBI" id="CHEBI:57692"/>
        <dbReference type="ChEBI" id="CHEBI:58210"/>
        <dbReference type="EC" id="2.7.7.2"/>
    </reaction>
</comment>
<comment type="pathway">
    <text evidence="1">Cofactor biosynthesis; FAD biosynthesis; FAD from FMN: step 1/1.</text>
</comment>
<comment type="pathway">
    <text evidence="1">Cofactor biosynthesis; FMN biosynthesis; FMN from riboflavin (ATP route): step 1/1.</text>
</comment>
<comment type="similarity">
    <text evidence="2">Belongs to the RibF family.</text>
</comment>
<name>RIBF_SHIFL</name>